<keyword id="KW-0030">Aminoacyl-tRNA synthetase</keyword>
<keyword id="KW-0067">ATP-binding</keyword>
<keyword id="KW-0963">Cytoplasm</keyword>
<keyword id="KW-0436">Ligase</keyword>
<keyword id="KW-0479">Metal-binding</keyword>
<keyword id="KW-0547">Nucleotide-binding</keyword>
<keyword id="KW-0648">Protein biosynthesis</keyword>
<keyword id="KW-0862">Zinc</keyword>
<feature type="chain" id="PRO_1000006594" description="Cysteine--tRNA ligase">
    <location>
        <begin position="1"/>
        <end position="468"/>
    </location>
</feature>
<feature type="short sequence motif" description="'HIGH' region">
    <location>
        <begin position="35"/>
        <end position="45"/>
    </location>
</feature>
<feature type="short sequence motif" description="'KMSKS' region">
    <location>
        <begin position="267"/>
        <end position="271"/>
    </location>
</feature>
<feature type="binding site" evidence="1">
    <location>
        <position position="33"/>
    </location>
    <ligand>
        <name>Zn(2+)</name>
        <dbReference type="ChEBI" id="CHEBI:29105"/>
    </ligand>
</feature>
<feature type="binding site" evidence="1">
    <location>
        <position position="211"/>
    </location>
    <ligand>
        <name>Zn(2+)</name>
        <dbReference type="ChEBI" id="CHEBI:29105"/>
    </ligand>
</feature>
<feature type="binding site" evidence="1">
    <location>
        <position position="236"/>
    </location>
    <ligand>
        <name>Zn(2+)</name>
        <dbReference type="ChEBI" id="CHEBI:29105"/>
    </ligand>
</feature>
<feature type="binding site" evidence="1">
    <location>
        <position position="240"/>
    </location>
    <ligand>
        <name>Zn(2+)</name>
        <dbReference type="ChEBI" id="CHEBI:29105"/>
    </ligand>
</feature>
<feature type="binding site" evidence="1">
    <location>
        <position position="270"/>
    </location>
    <ligand>
        <name>ATP</name>
        <dbReference type="ChEBI" id="CHEBI:30616"/>
    </ligand>
</feature>
<organism>
    <name type="scientific">Mycobacterium avium (strain 104)</name>
    <dbReference type="NCBI Taxonomy" id="243243"/>
    <lineage>
        <taxon>Bacteria</taxon>
        <taxon>Bacillati</taxon>
        <taxon>Actinomycetota</taxon>
        <taxon>Actinomycetes</taxon>
        <taxon>Mycobacteriales</taxon>
        <taxon>Mycobacteriaceae</taxon>
        <taxon>Mycobacterium</taxon>
        <taxon>Mycobacterium avium complex (MAC)</taxon>
    </lineage>
</organism>
<dbReference type="EC" id="6.1.1.16" evidence="1"/>
<dbReference type="EMBL" id="CP000479">
    <property type="protein sequence ID" value="ABK68575.1"/>
    <property type="molecule type" value="Genomic_DNA"/>
</dbReference>
<dbReference type="RefSeq" id="WP_009974759.1">
    <property type="nucleotide sequence ID" value="NC_008595.1"/>
</dbReference>
<dbReference type="SMR" id="A0QAB5"/>
<dbReference type="KEGG" id="mav:MAV_0573"/>
<dbReference type="HOGENOM" id="CLU_013528_0_1_11"/>
<dbReference type="Proteomes" id="UP000001574">
    <property type="component" value="Chromosome"/>
</dbReference>
<dbReference type="GO" id="GO:0005829">
    <property type="term" value="C:cytosol"/>
    <property type="evidence" value="ECO:0007669"/>
    <property type="project" value="TreeGrafter"/>
</dbReference>
<dbReference type="GO" id="GO:0005524">
    <property type="term" value="F:ATP binding"/>
    <property type="evidence" value="ECO:0007669"/>
    <property type="project" value="UniProtKB-UniRule"/>
</dbReference>
<dbReference type="GO" id="GO:0004817">
    <property type="term" value="F:cysteine-tRNA ligase activity"/>
    <property type="evidence" value="ECO:0007669"/>
    <property type="project" value="UniProtKB-UniRule"/>
</dbReference>
<dbReference type="GO" id="GO:0008270">
    <property type="term" value="F:zinc ion binding"/>
    <property type="evidence" value="ECO:0007669"/>
    <property type="project" value="UniProtKB-UniRule"/>
</dbReference>
<dbReference type="GO" id="GO:0006423">
    <property type="term" value="P:cysteinyl-tRNA aminoacylation"/>
    <property type="evidence" value="ECO:0007669"/>
    <property type="project" value="UniProtKB-UniRule"/>
</dbReference>
<dbReference type="CDD" id="cd00672">
    <property type="entry name" value="CysRS_core"/>
    <property type="match status" value="1"/>
</dbReference>
<dbReference type="FunFam" id="3.40.50.620:FF:000068">
    <property type="entry name" value="Cysteine--tRNA ligase"/>
    <property type="match status" value="1"/>
</dbReference>
<dbReference type="Gene3D" id="1.20.120.1910">
    <property type="entry name" value="Cysteine-tRNA ligase, C-terminal anti-codon recognition domain"/>
    <property type="match status" value="1"/>
</dbReference>
<dbReference type="Gene3D" id="3.40.50.620">
    <property type="entry name" value="HUPs"/>
    <property type="match status" value="1"/>
</dbReference>
<dbReference type="HAMAP" id="MF_00041">
    <property type="entry name" value="Cys_tRNA_synth"/>
    <property type="match status" value="1"/>
</dbReference>
<dbReference type="InterPro" id="IPR015803">
    <property type="entry name" value="Cys-tRNA-ligase"/>
</dbReference>
<dbReference type="InterPro" id="IPR015273">
    <property type="entry name" value="Cys-tRNA-synt_Ia_DALR"/>
</dbReference>
<dbReference type="InterPro" id="IPR024909">
    <property type="entry name" value="Cys-tRNA/MSH_ligase"/>
</dbReference>
<dbReference type="InterPro" id="IPR014729">
    <property type="entry name" value="Rossmann-like_a/b/a_fold"/>
</dbReference>
<dbReference type="InterPro" id="IPR032678">
    <property type="entry name" value="tRNA-synt_1_cat_dom"/>
</dbReference>
<dbReference type="InterPro" id="IPR009080">
    <property type="entry name" value="tRNAsynth_Ia_anticodon-bd"/>
</dbReference>
<dbReference type="NCBIfam" id="TIGR00435">
    <property type="entry name" value="cysS"/>
    <property type="match status" value="1"/>
</dbReference>
<dbReference type="PANTHER" id="PTHR10890:SF30">
    <property type="entry name" value="CYSTEINE--TRNA LIGASE"/>
    <property type="match status" value="1"/>
</dbReference>
<dbReference type="PANTHER" id="PTHR10890">
    <property type="entry name" value="CYSTEINYL-TRNA SYNTHETASE"/>
    <property type="match status" value="1"/>
</dbReference>
<dbReference type="Pfam" id="PF09190">
    <property type="entry name" value="DALR_2"/>
    <property type="match status" value="1"/>
</dbReference>
<dbReference type="Pfam" id="PF01406">
    <property type="entry name" value="tRNA-synt_1e"/>
    <property type="match status" value="1"/>
</dbReference>
<dbReference type="PRINTS" id="PR00983">
    <property type="entry name" value="TRNASYNTHCYS"/>
</dbReference>
<dbReference type="SMART" id="SM00840">
    <property type="entry name" value="DALR_2"/>
    <property type="match status" value="1"/>
</dbReference>
<dbReference type="SUPFAM" id="SSF47323">
    <property type="entry name" value="Anticodon-binding domain of a subclass of class I aminoacyl-tRNA synthetases"/>
    <property type="match status" value="1"/>
</dbReference>
<dbReference type="SUPFAM" id="SSF52374">
    <property type="entry name" value="Nucleotidylyl transferase"/>
    <property type="match status" value="1"/>
</dbReference>
<sequence>MTDRPRLRLHDTAAGAVRDFVPLRDGHVSIYLCGATVQGLPHIGHVRSGVAFDILRRWLIALGYDVAFIRNVTDIDDKILNKAAAAGRPWWEWAATYERAFSAAYDALDVLPPSAEPRATGHITQMVELIERLIEKGHAYTGDGDVYFDVLSYPEYGQLSGHRIDDVHQGEGVASGKRDQRDFTLWKGAKPGEPSWPTPWGRGRPGWHTECVAMAHEYLGPEFDIHCGGMDLVFPHHENEIAQSRAAGDGFARYWLHNGWVTMGGEKMSKSLGNVLAIPAMLQRVRPAELRYYLGSAHYRSMLEFSDTALQDAVKAYVGVEEFLHRVRVRVGAVEPGEPTPRFADALNDDLAVPAALAEVHQARAEGNRALDSGDHEGALRQARSIRAMMGILGCDPLHERWETRDESSAALAAVDVLVRAELQNREKAREQRNWALADEIRNRLKQAGIEVTDTADGPQWTLGGDGK</sequence>
<protein>
    <recommendedName>
        <fullName evidence="1">Cysteine--tRNA ligase</fullName>
        <ecNumber evidence="1">6.1.1.16</ecNumber>
    </recommendedName>
    <alternativeName>
        <fullName evidence="1">Cysteinyl-tRNA synthetase</fullName>
        <shortName evidence="1">CysRS</shortName>
    </alternativeName>
</protein>
<comment type="catalytic activity">
    <reaction evidence="1">
        <text>tRNA(Cys) + L-cysteine + ATP = L-cysteinyl-tRNA(Cys) + AMP + diphosphate</text>
        <dbReference type="Rhea" id="RHEA:17773"/>
        <dbReference type="Rhea" id="RHEA-COMP:9661"/>
        <dbReference type="Rhea" id="RHEA-COMP:9679"/>
        <dbReference type="ChEBI" id="CHEBI:30616"/>
        <dbReference type="ChEBI" id="CHEBI:33019"/>
        <dbReference type="ChEBI" id="CHEBI:35235"/>
        <dbReference type="ChEBI" id="CHEBI:78442"/>
        <dbReference type="ChEBI" id="CHEBI:78517"/>
        <dbReference type="ChEBI" id="CHEBI:456215"/>
        <dbReference type="EC" id="6.1.1.16"/>
    </reaction>
</comment>
<comment type="cofactor">
    <cofactor evidence="1">
        <name>Zn(2+)</name>
        <dbReference type="ChEBI" id="CHEBI:29105"/>
    </cofactor>
    <text evidence="1">Binds 1 zinc ion per subunit.</text>
</comment>
<comment type="subunit">
    <text evidence="1">Monomer.</text>
</comment>
<comment type="subcellular location">
    <subcellularLocation>
        <location evidence="1">Cytoplasm</location>
    </subcellularLocation>
</comment>
<comment type="similarity">
    <text evidence="1">Belongs to the class-I aminoacyl-tRNA synthetase family.</text>
</comment>
<reference key="1">
    <citation type="submission" date="2006-10" db="EMBL/GenBank/DDBJ databases">
        <authorList>
            <person name="Fleischmann R.D."/>
            <person name="Dodson R.J."/>
            <person name="Haft D.H."/>
            <person name="Merkel J.S."/>
            <person name="Nelson W.C."/>
            <person name="Fraser C.M."/>
        </authorList>
    </citation>
    <scope>NUCLEOTIDE SEQUENCE [LARGE SCALE GENOMIC DNA]</scope>
    <source>
        <strain>104</strain>
    </source>
</reference>
<name>SYC_MYCA1</name>
<accession>A0QAB5</accession>
<evidence type="ECO:0000255" key="1">
    <source>
        <dbReference type="HAMAP-Rule" id="MF_00041"/>
    </source>
</evidence>
<gene>
    <name evidence="1" type="primary">cysS</name>
    <name type="ordered locus">MAV_0573</name>
</gene>
<proteinExistence type="inferred from homology"/>